<name>RECR_THIDA</name>
<sequence>MQPAALESLINALRVLPGVGPKSAARMAYHLLQRDRRGAETLAGALGHALTHLHHCRLCNNFSEAEVCEVCASTRRDRRQLAVVEMPADFNMMEATQSYNGLYFVLMGRLSPLDGIGPREIHLDRLINRALDGTVEEVILATNFTPEGEATAHTIGELLKARGLKVSRLARGVPVGGELEYVDSGTLAQAVRDRRAL</sequence>
<feature type="chain" id="PRO_0000322968" description="Recombination protein RecR">
    <location>
        <begin position="1"/>
        <end position="197"/>
    </location>
</feature>
<feature type="domain" description="Toprim" evidence="1">
    <location>
        <begin position="79"/>
        <end position="174"/>
    </location>
</feature>
<feature type="zinc finger region" description="C4-type" evidence="1">
    <location>
        <begin position="56"/>
        <end position="71"/>
    </location>
</feature>
<organism>
    <name type="scientific">Thiobacillus denitrificans (strain ATCC 25259 / T1)</name>
    <dbReference type="NCBI Taxonomy" id="292415"/>
    <lineage>
        <taxon>Bacteria</taxon>
        <taxon>Pseudomonadati</taxon>
        <taxon>Pseudomonadota</taxon>
        <taxon>Betaproteobacteria</taxon>
        <taxon>Nitrosomonadales</taxon>
        <taxon>Thiobacillaceae</taxon>
        <taxon>Thiobacillus</taxon>
    </lineage>
</organism>
<keyword id="KW-0227">DNA damage</keyword>
<keyword id="KW-0233">DNA recombination</keyword>
<keyword id="KW-0234">DNA repair</keyword>
<keyword id="KW-0479">Metal-binding</keyword>
<keyword id="KW-1185">Reference proteome</keyword>
<keyword id="KW-0862">Zinc</keyword>
<keyword id="KW-0863">Zinc-finger</keyword>
<proteinExistence type="inferred from homology"/>
<protein>
    <recommendedName>
        <fullName evidence="1">Recombination protein RecR</fullName>
    </recommendedName>
</protein>
<comment type="function">
    <text evidence="1">May play a role in DNA repair. It seems to be involved in an RecBC-independent recombinational process of DNA repair. It may act with RecF and RecO.</text>
</comment>
<comment type="similarity">
    <text evidence="1">Belongs to the RecR family.</text>
</comment>
<gene>
    <name evidence="1" type="primary">recR</name>
    <name type="ordered locus">Tbd_0517</name>
</gene>
<evidence type="ECO:0000255" key="1">
    <source>
        <dbReference type="HAMAP-Rule" id="MF_00017"/>
    </source>
</evidence>
<reference key="1">
    <citation type="journal article" date="2006" name="J. Bacteriol.">
        <title>The genome sequence of the obligately chemolithoautotrophic, facultatively anaerobic bacterium Thiobacillus denitrificans.</title>
        <authorList>
            <person name="Beller H.R."/>
            <person name="Chain P.S."/>
            <person name="Letain T.E."/>
            <person name="Chakicherla A."/>
            <person name="Larimer F.W."/>
            <person name="Richardson P.M."/>
            <person name="Coleman M.A."/>
            <person name="Wood A.P."/>
            <person name="Kelly D.P."/>
        </authorList>
    </citation>
    <scope>NUCLEOTIDE SEQUENCE [LARGE SCALE GENOMIC DNA]</scope>
    <source>
        <strain>ATCC 25259 / T1</strain>
    </source>
</reference>
<dbReference type="EMBL" id="CP000116">
    <property type="protein sequence ID" value="AAZ96470.1"/>
    <property type="molecule type" value="Genomic_DNA"/>
</dbReference>
<dbReference type="RefSeq" id="WP_011311029.1">
    <property type="nucleotide sequence ID" value="NC_007404.1"/>
</dbReference>
<dbReference type="SMR" id="Q3SLE3"/>
<dbReference type="STRING" id="292415.Tbd_0517"/>
<dbReference type="KEGG" id="tbd:Tbd_0517"/>
<dbReference type="eggNOG" id="COG0353">
    <property type="taxonomic scope" value="Bacteria"/>
</dbReference>
<dbReference type="HOGENOM" id="CLU_060739_1_2_4"/>
<dbReference type="OrthoDB" id="9802672at2"/>
<dbReference type="Proteomes" id="UP000008291">
    <property type="component" value="Chromosome"/>
</dbReference>
<dbReference type="GO" id="GO:0003677">
    <property type="term" value="F:DNA binding"/>
    <property type="evidence" value="ECO:0007669"/>
    <property type="project" value="UniProtKB-UniRule"/>
</dbReference>
<dbReference type="GO" id="GO:0008270">
    <property type="term" value="F:zinc ion binding"/>
    <property type="evidence" value="ECO:0007669"/>
    <property type="project" value="UniProtKB-KW"/>
</dbReference>
<dbReference type="GO" id="GO:0006310">
    <property type="term" value="P:DNA recombination"/>
    <property type="evidence" value="ECO:0007669"/>
    <property type="project" value="UniProtKB-UniRule"/>
</dbReference>
<dbReference type="GO" id="GO:0006281">
    <property type="term" value="P:DNA repair"/>
    <property type="evidence" value="ECO:0007669"/>
    <property type="project" value="UniProtKB-UniRule"/>
</dbReference>
<dbReference type="CDD" id="cd01025">
    <property type="entry name" value="TOPRIM_recR"/>
    <property type="match status" value="1"/>
</dbReference>
<dbReference type="Gene3D" id="3.40.1360.10">
    <property type="match status" value="1"/>
</dbReference>
<dbReference type="Gene3D" id="6.10.250.240">
    <property type="match status" value="1"/>
</dbReference>
<dbReference type="Gene3D" id="1.10.8.420">
    <property type="entry name" value="RecR Domain 1"/>
    <property type="match status" value="1"/>
</dbReference>
<dbReference type="HAMAP" id="MF_00017">
    <property type="entry name" value="RecR"/>
    <property type="match status" value="1"/>
</dbReference>
<dbReference type="InterPro" id="IPR000093">
    <property type="entry name" value="DNA_Rcmb_RecR"/>
</dbReference>
<dbReference type="InterPro" id="IPR023627">
    <property type="entry name" value="Rcmb_RecR"/>
</dbReference>
<dbReference type="InterPro" id="IPR015967">
    <property type="entry name" value="Rcmb_RecR_Znf"/>
</dbReference>
<dbReference type="InterPro" id="IPR006171">
    <property type="entry name" value="TOPRIM_dom"/>
</dbReference>
<dbReference type="InterPro" id="IPR034137">
    <property type="entry name" value="TOPRIM_RecR"/>
</dbReference>
<dbReference type="NCBIfam" id="TIGR00615">
    <property type="entry name" value="recR"/>
    <property type="match status" value="1"/>
</dbReference>
<dbReference type="PANTHER" id="PTHR30446">
    <property type="entry name" value="RECOMBINATION PROTEIN RECR"/>
    <property type="match status" value="1"/>
</dbReference>
<dbReference type="PANTHER" id="PTHR30446:SF0">
    <property type="entry name" value="RECOMBINATION PROTEIN RECR"/>
    <property type="match status" value="1"/>
</dbReference>
<dbReference type="Pfam" id="PF21175">
    <property type="entry name" value="RecR_C"/>
    <property type="match status" value="1"/>
</dbReference>
<dbReference type="Pfam" id="PF21176">
    <property type="entry name" value="RecR_HhH"/>
    <property type="match status" value="1"/>
</dbReference>
<dbReference type="Pfam" id="PF02132">
    <property type="entry name" value="RecR_ZnF"/>
    <property type="match status" value="1"/>
</dbReference>
<dbReference type="Pfam" id="PF13662">
    <property type="entry name" value="Toprim_4"/>
    <property type="match status" value="1"/>
</dbReference>
<dbReference type="SMART" id="SM00493">
    <property type="entry name" value="TOPRIM"/>
    <property type="match status" value="1"/>
</dbReference>
<dbReference type="SUPFAM" id="SSF111304">
    <property type="entry name" value="Recombination protein RecR"/>
    <property type="match status" value="1"/>
</dbReference>
<dbReference type="PROSITE" id="PS01300">
    <property type="entry name" value="RECR"/>
    <property type="match status" value="1"/>
</dbReference>
<dbReference type="PROSITE" id="PS50880">
    <property type="entry name" value="TOPRIM"/>
    <property type="match status" value="1"/>
</dbReference>
<accession>Q3SLE3</accession>